<accession>A6RBC5</accession>
<comment type="function">
    <text evidence="1">Component of the MICOS complex, a large protein complex of the mitochondrial inner membrane that plays crucial roles in the maintenance of crista junctions, inner membrane architecture, and formation of contact sites to the outer membrane. Plays a role in keeping cristae membranes connected to the inner boundary membrane. Also promotes protein import via the mitochondrial intermembrane space assembly (MIA) pathway (By similarity).</text>
</comment>
<comment type="subunit">
    <text evidence="1">Component of the mitochondrial contact site and cristae organizing system (MICOS) complex.</text>
</comment>
<comment type="subcellular location">
    <subcellularLocation>
        <location evidence="1">Mitochondrion inner membrane</location>
        <topology evidence="1">Single-pass membrane protein</topology>
    </subcellularLocation>
</comment>
<comment type="similarity">
    <text evidence="4">Belongs to the MICOS complex subunit Mic60 family.</text>
</comment>
<gene>
    <name type="primary">MIC60</name>
    <name type="ORF">HCAG_06263</name>
</gene>
<protein>
    <recommendedName>
        <fullName>MICOS complex subunit MIC60</fullName>
    </recommendedName>
    <alternativeName>
        <fullName>Mitofilin</fullName>
    </alternativeName>
</protein>
<sequence length="666" mass="73739">MAMYLKSQAVLTLIPQRYHALARKSNAGRRCSLTPNSATASQFFQKAASSTSTKPPGPSDADVRSPASPSSRSSLRPESIPKPPQSPPVQGQTSPGSEVLPPDHESSTPPPPPPPPQGPKSSRLRKLLYLFLTAGLAYAGGVWYSLRSDNFYDFFTEYIPYGEEAVLYLEERDFRNRFPHVTKQINRRVTVPKDEGAQVTIPSGSGLSWKVAEEQQEATDMTKKGRRMGTAHANEPTKDIKVAEKAKEEVKSKSAAKKEDVAANIPIQEDLEPQPAKAEERNLDAPRQPAVPAATTIERLVQDKVDEPVVQDLVKVFNDVISVISADESASKFAGPIAKAKEELQRIGDRIVALKKDAQESAQEEIRNAHAAFDKSAAELIRRIDEVRTQDAAEFREEFESEREKIARSYQEKVNTELQRAHEVAEQRLRNELVEQAIELNRKFLSDVKTLVENEREGRLSKLAELTANVAELERLTAGWSDVVDINLKTQQLQVAVDAVRTTLENSDVPRPFVRELAAVKELASNDEVVAAAIASISPAAYQRGIPSAAQLVERFRRVASEVRKASLLPENAGITSHAASLVLSKVMLKKQGLPTGDDVESILTRTENFLEEGNFDEAAREMNSLQGWAKLLSKDWLADVRQVLEVKQALEIIETEARLRCLQVE</sequence>
<evidence type="ECO:0000250" key="1"/>
<evidence type="ECO:0000255" key="2"/>
<evidence type="ECO:0000256" key="3">
    <source>
        <dbReference type="SAM" id="MobiDB-lite"/>
    </source>
</evidence>
<evidence type="ECO:0000305" key="4"/>
<keyword id="KW-0175">Coiled coil</keyword>
<keyword id="KW-0472">Membrane</keyword>
<keyword id="KW-0496">Mitochondrion</keyword>
<keyword id="KW-0999">Mitochondrion inner membrane</keyword>
<keyword id="KW-1185">Reference proteome</keyword>
<keyword id="KW-0809">Transit peptide</keyword>
<keyword id="KW-0812">Transmembrane</keyword>
<keyword id="KW-1133">Transmembrane helix</keyword>
<proteinExistence type="inferred from homology"/>
<organism>
    <name type="scientific">Ajellomyces capsulatus (strain NAm1 / WU24)</name>
    <name type="common">Darling's disease fungus</name>
    <name type="synonym">Histoplasma capsulatum</name>
    <dbReference type="NCBI Taxonomy" id="2059318"/>
    <lineage>
        <taxon>Eukaryota</taxon>
        <taxon>Fungi</taxon>
        <taxon>Dikarya</taxon>
        <taxon>Ascomycota</taxon>
        <taxon>Pezizomycotina</taxon>
        <taxon>Eurotiomycetes</taxon>
        <taxon>Eurotiomycetidae</taxon>
        <taxon>Onygenales</taxon>
        <taxon>Ajellomycetaceae</taxon>
        <taxon>Histoplasma</taxon>
    </lineage>
</organism>
<dbReference type="EMBL" id="CH476661">
    <property type="protein sequence ID" value="EDN10460.1"/>
    <property type="molecule type" value="Genomic_DNA"/>
</dbReference>
<dbReference type="SMR" id="A6RBC5"/>
<dbReference type="STRING" id="339724.A6RBC5"/>
<dbReference type="KEGG" id="aje:HCAG_06263"/>
<dbReference type="VEuPathDB" id="FungiDB:HCAG_06263"/>
<dbReference type="HOGENOM" id="CLU_008024_1_2_1"/>
<dbReference type="OMA" id="RLDHQMQ"/>
<dbReference type="OrthoDB" id="10062at299071"/>
<dbReference type="Proteomes" id="UP000009297">
    <property type="component" value="Unassembled WGS sequence"/>
</dbReference>
<dbReference type="GO" id="GO:0061617">
    <property type="term" value="C:MICOS complex"/>
    <property type="evidence" value="ECO:0007669"/>
    <property type="project" value="TreeGrafter"/>
</dbReference>
<dbReference type="GO" id="GO:0042407">
    <property type="term" value="P:cristae formation"/>
    <property type="evidence" value="ECO:0007669"/>
    <property type="project" value="TreeGrafter"/>
</dbReference>
<dbReference type="InterPro" id="IPR019133">
    <property type="entry name" value="MIC60"/>
</dbReference>
<dbReference type="PANTHER" id="PTHR15415:SF7">
    <property type="entry name" value="MICOS COMPLEX SUBUNIT MIC60"/>
    <property type="match status" value="1"/>
</dbReference>
<dbReference type="PANTHER" id="PTHR15415">
    <property type="entry name" value="MITOFILIN"/>
    <property type="match status" value="1"/>
</dbReference>
<dbReference type="Pfam" id="PF09731">
    <property type="entry name" value="Mitofilin"/>
    <property type="match status" value="2"/>
</dbReference>
<reference key="1">
    <citation type="journal article" date="2009" name="Genome Res.">
        <title>Comparative genomic analyses of the human fungal pathogens Coccidioides and their relatives.</title>
        <authorList>
            <person name="Sharpton T.J."/>
            <person name="Stajich J.E."/>
            <person name="Rounsley S.D."/>
            <person name="Gardner M.J."/>
            <person name="Wortman J.R."/>
            <person name="Jordar V.S."/>
            <person name="Maiti R."/>
            <person name="Kodira C.D."/>
            <person name="Neafsey D.E."/>
            <person name="Zeng Q."/>
            <person name="Hung C.-Y."/>
            <person name="McMahan C."/>
            <person name="Muszewska A."/>
            <person name="Grynberg M."/>
            <person name="Mandel M.A."/>
            <person name="Kellner E.M."/>
            <person name="Barker B.M."/>
            <person name="Galgiani J.N."/>
            <person name="Orbach M.J."/>
            <person name="Kirkland T.N."/>
            <person name="Cole G.T."/>
            <person name="Henn M.R."/>
            <person name="Birren B.W."/>
            <person name="Taylor J.W."/>
        </authorList>
    </citation>
    <scope>NUCLEOTIDE SEQUENCE [LARGE SCALE GENOMIC DNA]</scope>
    <source>
        <strain>NAm1 / WU24</strain>
    </source>
</reference>
<name>MIC60_AJECN</name>
<feature type="transit peptide" description="Mitochondrion" evidence="2">
    <location>
        <begin position="1"/>
        <end position="19"/>
    </location>
</feature>
<feature type="chain" id="PRO_0000406639" description="MICOS complex subunit MIC60">
    <location>
        <begin position="20"/>
        <end position="666"/>
    </location>
</feature>
<feature type="topological domain" description="Mitochondrial matrix" evidence="2">
    <location>
        <begin position="20"/>
        <end position="126"/>
    </location>
</feature>
<feature type="transmembrane region" description="Helical" evidence="2">
    <location>
        <begin position="127"/>
        <end position="146"/>
    </location>
</feature>
<feature type="topological domain" description="Mitochondrial intermembrane" evidence="2">
    <location>
        <begin position="147"/>
        <end position="666"/>
    </location>
</feature>
<feature type="region of interest" description="Disordered" evidence="3">
    <location>
        <begin position="25"/>
        <end position="122"/>
    </location>
</feature>
<feature type="region of interest" description="Disordered" evidence="3">
    <location>
        <begin position="251"/>
        <end position="287"/>
    </location>
</feature>
<feature type="coiled-coil region" evidence="2">
    <location>
        <begin position="337"/>
        <end position="482"/>
    </location>
</feature>
<feature type="compositionally biased region" description="Polar residues" evidence="3">
    <location>
        <begin position="33"/>
        <end position="54"/>
    </location>
</feature>
<feature type="compositionally biased region" description="Low complexity" evidence="3">
    <location>
        <begin position="64"/>
        <end position="78"/>
    </location>
</feature>
<feature type="compositionally biased region" description="Pro residues" evidence="3">
    <location>
        <begin position="108"/>
        <end position="118"/>
    </location>
</feature>
<feature type="compositionally biased region" description="Basic and acidic residues" evidence="3">
    <location>
        <begin position="251"/>
        <end position="261"/>
    </location>
</feature>